<feature type="signal peptide" evidence="3">
    <location>
        <begin position="1"/>
        <end position="29"/>
    </location>
</feature>
<feature type="propeptide" id="PRO_0000029158" evidence="1">
    <location>
        <begin position="30"/>
        <end position="253"/>
    </location>
</feature>
<feature type="chain" id="PRO_0000029159" description="A disintegrin and metalloproteinase with thrombospondin motifs 2">
    <location>
        <begin position="254"/>
        <end position="1211"/>
    </location>
</feature>
<feature type="domain" description="Peptidase M12B" evidence="6">
    <location>
        <begin position="266"/>
        <end position="470"/>
    </location>
</feature>
<feature type="domain" description="Disintegrin">
    <location>
        <begin position="480"/>
        <end position="560"/>
    </location>
</feature>
<feature type="domain" description="TSP type-1 1" evidence="4">
    <location>
        <begin position="561"/>
        <end position="616"/>
    </location>
</feature>
<feature type="domain" description="TSP type-1 2" evidence="4">
    <location>
        <begin position="854"/>
        <end position="912"/>
    </location>
</feature>
<feature type="domain" description="TSP type-1 3" evidence="4">
    <location>
        <begin position="914"/>
        <end position="971"/>
    </location>
</feature>
<feature type="domain" description="TSP type-1 4" evidence="4">
    <location>
        <begin position="975"/>
        <end position="1029"/>
    </location>
</feature>
<feature type="domain" description="PLAC" evidence="5">
    <location>
        <begin position="1059"/>
        <end position="1097"/>
    </location>
</feature>
<feature type="region of interest" description="Spacer">
    <location>
        <begin position="723"/>
        <end position="851"/>
    </location>
</feature>
<feature type="region of interest" description="Disordered" evidence="7">
    <location>
        <begin position="1170"/>
        <end position="1191"/>
    </location>
</feature>
<feature type="short sequence motif" description="Cell attachment site" evidence="3">
    <location>
        <begin position="691"/>
        <end position="693"/>
    </location>
</feature>
<feature type="active site" evidence="6">
    <location>
        <position position="409"/>
    </location>
</feature>
<feature type="binding site" evidence="6">
    <location>
        <position position="408"/>
    </location>
    <ligand>
        <name>Zn(2+)</name>
        <dbReference type="ChEBI" id="CHEBI:29105"/>
        <note>catalytic</note>
    </ligand>
</feature>
<feature type="binding site" evidence="6">
    <location>
        <position position="412"/>
    </location>
    <ligand>
        <name>Zn(2+)</name>
        <dbReference type="ChEBI" id="CHEBI:29105"/>
        <note>catalytic</note>
    </ligand>
</feature>
<feature type="binding site" evidence="6">
    <location>
        <position position="418"/>
    </location>
    <ligand>
        <name>Zn(2+)</name>
        <dbReference type="ChEBI" id="CHEBI:29105"/>
        <note>catalytic</note>
    </ligand>
</feature>
<feature type="glycosylation site" description="N-linked (GlcNAc...) asparagine" evidence="3">
    <location>
        <position position="112"/>
    </location>
</feature>
<feature type="glycosylation site" description="N-linked (GlcNAc...) asparagine" evidence="3">
    <location>
        <position position="251"/>
    </location>
</feature>
<feature type="glycosylation site" description="N-linked (GlcNAc...) asparagine" evidence="3">
    <location>
        <position position="949"/>
    </location>
</feature>
<feature type="glycosylation site" description="N-linked (GlcNAc...) asparagine" evidence="3">
    <location>
        <position position="993"/>
    </location>
</feature>
<feature type="glycosylation site" description="N-linked (GlcNAc...) asparagine" evidence="3">
    <location>
        <position position="1031"/>
    </location>
</feature>
<feature type="glycosylation site" description="N-linked (GlcNAc...) asparagine" evidence="3">
    <location>
        <position position="1098"/>
    </location>
</feature>
<feature type="glycosylation site" description="N-linked (GlcNAc...) asparagine" evidence="3">
    <location>
        <position position="1145"/>
    </location>
</feature>
<feature type="glycosylation site" description="N-linked (GlcNAc...) asparagine" evidence="3">
    <location>
        <position position="1150"/>
    </location>
</feature>
<feature type="disulfide bond" evidence="1">
    <location>
        <begin position="343"/>
        <end position="392"/>
    </location>
</feature>
<feature type="disulfide bond" evidence="1">
    <location>
        <begin position="386"/>
        <end position="465"/>
    </location>
</feature>
<feature type="disulfide bond" evidence="1">
    <location>
        <begin position="425"/>
        <end position="451"/>
    </location>
</feature>
<feature type="disulfide bond" evidence="1">
    <location>
        <begin position="492"/>
        <end position="517"/>
    </location>
</feature>
<feature type="disulfide bond" evidence="1">
    <location>
        <begin position="503"/>
        <end position="526"/>
    </location>
</feature>
<feature type="disulfide bond" evidence="1">
    <location>
        <begin position="512"/>
        <end position="545"/>
    </location>
</feature>
<feature type="disulfide bond" evidence="1">
    <location>
        <begin position="539"/>
        <end position="550"/>
    </location>
</feature>
<feature type="disulfide bond" evidence="1">
    <location>
        <begin position="573"/>
        <end position="610"/>
    </location>
</feature>
<feature type="disulfide bond" evidence="1">
    <location>
        <begin position="577"/>
        <end position="615"/>
    </location>
</feature>
<feature type="disulfide bond" evidence="1">
    <location>
        <begin position="588"/>
        <end position="600"/>
    </location>
</feature>
<feature type="disulfide bond" evidence="1">
    <location>
        <begin position="987"/>
        <end position="1023"/>
    </location>
</feature>
<feature type="disulfide bond" evidence="1">
    <location>
        <begin position="991"/>
        <end position="1028"/>
    </location>
</feature>
<feature type="disulfide bond" evidence="1">
    <location>
        <begin position="1002"/>
        <end position="1012"/>
    </location>
</feature>
<feature type="splice variant" id="VSP_005497" description="In isoform SpNPI." evidence="10">
    <original>HCFKGHCIWLTPDILKRDGSWGA</original>
    <variation>FRPGAVAHACYPSTLGGQGRWIA</variation>
    <location>
        <begin position="544"/>
        <end position="566"/>
    </location>
</feature>
<feature type="splice variant" id="VSP_005498" description="In isoform SpNPI." evidence="10">
    <location>
        <begin position="567"/>
        <end position="1211"/>
    </location>
</feature>
<feature type="sequence variant" id="VAR_047927" description="In dbSNP:rs2271211.">
    <original>V</original>
    <variation>M</variation>
    <location>
        <position position="74"/>
    </location>
</feature>
<feature type="sequence variant" id="VAR_047928" description="In dbSNP:rs11750821.">
    <original>R</original>
    <variation>H</variation>
    <location>
        <position position="241"/>
    </location>
</feature>
<feature type="sequence variant" id="VAR_020058" description="In dbSNP:rs398829.">
    <original>V</original>
    <variation>I</variation>
    <location>
        <position position="245"/>
    </location>
</feature>
<feature type="sequence variant" id="VAR_047929" description="In dbSNP:rs17667857.">
    <original>E</original>
    <variation>K</variation>
    <location>
        <position position="331"/>
    </location>
</feature>
<feature type="sequence variant" id="VAR_047930" description="In dbSNP:rs35372714.">
    <original>G</original>
    <variation>R</variation>
    <location>
        <position position="665"/>
    </location>
</feature>
<feature type="sequence variant" id="VAR_047931" description="In dbSNP:rs35445112.">
    <original>R</original>
    <variation>Q</variation>
    <location>
        <position position="827"/>
    </location>
</feature>
<feature type="sequence variant" id="VAR_020059" description="In dbSNP:rs1054480.">
    <original>P</original>
    <variation>S</variation>
    <location>
        <position position="1177"/>
    </location>
</feature>
<feature type="sequence conflict" description="In Ref. 1; CAA05880." evidence="11" ref="1">
    <original>L</original>
    <variation>P</variation>
    <location>
        <position position="1001"/>
    </location>
</feature>
<feature type="sequence conflict" description="In Ref. 1; CAA05880." evidence="11" ref="1">
    <original>C</original>
    <variation>S</variation>
    <location>
        <position position="1089"/>
    </location>
</feature>
<proteinExistence type="evidence at protein level"/>
<accession>O95450</accession>
<dbReference type="EC" id="3.4.24.14"/>
<dbReference type="EMBL" id="AJ003125">
    <property type="protein sequence ID" value="CAA05880.1"/>
    <property type="molecule type" value="mRNA"/>
</dbReference>
<dbReference type="EMBL" id="AC008544">
    <property type="status" value="NOT_ANNOTATED_CDS"/>
    <property type="molecule type" value="Genomic_DNA"/>
</dbReference>
<dbReference type="EMBL" id="AC010216">
    <property type="status" value="NOT_ANNOTATED_CDS"/>
    <property type="molecule type" value="Genomic_DNA"/>
</dbReference>
<dbReference type="EMBL" id="AC109479">
    <property type="status" value="NOT_ANNOTATED_CDS"/>
    <property type="molecule type" value="Genomic_DNA"/>
</dbReference>
<dbReference type="CCDS" id="CCDS34311.1">
    <molecule id="O95450-2"/>
</dbReference>
<dbReference type="CCDS" id="CCDS4444.1">
    <molecule id="O95450-1"/>
</dbReference>
<dbReference type="RefSeq" id="NP_055059.2">
    <molecule id="O95450-1"/>
    <property type="nucleotide sequence ID" value="NM_014244.5"/>
</dbReference>
<dbReference type="RefSeq" id="NP_067610.1">
    <molecule id="O95450-2"/>
    <property type="nucleotide sequence ID" value="NM_021599.4"/>
</dbReference>
<dbReference type="SMR" id="O95450"/>
<dbReference type="BioGRID" id="114887">
    <property type="interactions" value="54"/>
</dbReference>
<dbReference type="FunCoup" id="O95450">
    <property type="interactions" value="466"/>
</dbReference>
<dbReference type="IntAct" id="O95450">
    <property type="interactions" value="48"/>
</dbReference>
<dbReference type="STRING" id="9606.ENSP00000251582"/>
<dbReference type="MEROPS" id="M12.301"/>
<dbReference type="GlyCosmos" id="O95450">
    <property type="glycosylation" value="9 sites, 1 glycan"/>
</dbReference>
<dbReference type="GlyGen" id="O95450">
    <property type="glycosylation" value="11 sites, 7 N-linked glycans (5 sites), 2 O-linked glycans (3 sites)"/>
</dbReference>
<dbReference type="iPTMnet" id="O95450"/>
<dbReference type="PhosphoSitePlus" id="O95450"/>
<dbReference type="SwissPalm" id="O95450"/>
<dbReference type="BioMuta" id="ADAMTS2"/>
<dbReference type="jPOST" id="O95450"/>
<dbReference type="MassIVE" id="O95450"/>
<dbReference type="PaxDb" id="9606-ENSP00000251582"/>
<dbReference type="PeptideAtlas" id="O95450"/>
<dbReference type="ProteomicsDB" id="50883">
    <molecule id="O95450-1"/>
</dbReference>
<dbReference type="ProteomicsDB" id="50884">
    <molecule id="O95450-2"/>
</dbReference>
<dbReference type="Antibodypedia" id="17642">
    <property type="antibodies" value="170 antibodies from 28 providers"/>
</dbReference>
<dbReference type="DNASU" id="9509"/>
<dbReference type="Ensembl" id="ENST00000251582.12">
    <molecule id="O95450-1"/>
    <property type="protein sequence ID" value="ENSP00000251582.7"/>
    <property type="gene ID" value="ENSG00000087116.17"/>
</dbReference>
<dbReference type="Ensembl" id="ENST00000274609.5">
    <molecule id="O95450-2"/>
    <property type="protein sequence ID" value="ENSP00000274609.5"/>
    <property type="gene ID" value="ENSG00000087116.17"/>
</dbReference>
<dbReference type="GeneID" id="9509"/>
<dbReference type="KEGG" id="hsa:9509"/>
<dbReference type="MANE-Select" id="ENST00000251582.12">
    <property type="protein sequence ID" value="ENSP00000251582.7"/>
    <property type="RefSeq nucleotide sequence ID" value="NM_014244.5"/>
    <property type="RefSeq protein sequence ID" value="NP_055059.2"/>
</dbReference>
<dbReference type="UCSC" id="uc003mjw.3">
    <molecule id="O95450-1"/>
    <property type="organism name" value="human"/>
</dbReference>
<dbReference type="AGR" id="HGNC:218"/>
<dbReference type="CTD" id="9509"/>
<dbReference type="DisGeNET" id="9509"/>
<dbReference type="GeneCards" id="ADAMTS2"/>
<dbReference type="HGNC" id="HGNC:218">
    <property type="gene designation" value="ADAMTS2"/>
</dbReference>
<dbReference type="HPA" id="ENSG00000087116">
    <property type="expression patterns" value="Low tissue specificity"/>
</dbReference>
<dbReference type="MalaCards" id="ADAMTS2"/>
<dbReference type="MIM" id="225410">
    <property type="type" value="phenotype"/>
</dbReference>
<dbReference type="MIM" id="604539">
    <property type="type" value="gene"/>
</dbReference>
<dbReference type="neXtProt" id="NX_O95450"/>
<dbReference type="OpenTargets" id="ENSG00000087116"/>
<dbReference type="Orphanet" id="1901">
    <property type="disease" value="Dermatosparaxis Ehlers-Danlos syndrome"/>
</dbReference>
<dbReference type="PharmGKB" id="PA24546"/>
<dbReference type="VEuPathDB" id="HostDB:ENSG00000087116"/>
<dbReference type="eggNOG" id="KOG3538">
    <property type="taxonomic scope" value="Eukaryota"/>
</dbReference>
<dbReference type="GeneTree" id="ENSGT00940000156647"/>
<dbReference type="HOGENOM" id="CLU_000660_4_1_1"/>
<dbReference type="InParanoid" id="O95450"/>
<dbReference type="OMA" id="QCQGDKS"/>
<dbReference type="OrthoDB" id="5855429at2759"/>
<dbReference type="PAN-GO" id="O95450">
    <property type="GO annotations" value="3 GO annotations based on evolutionary models"/>
</dbReference>
<dbReference type="PhylomeDB" id="O95450"/>
<dbReference type="TreeFam" id="TF313537"/>
<dbReference type="BRENDA" id="3.4.24.14">
    <property type="organism ID" value="2681"/>
</dbReference>
<dbReference type="PathwayCommons" id="O95450"/>
<dbReference type="Reactome" id="R-HSA-1650814">
    <property type="pathway name" value="Collagen biosynthesis and modifying enzymes"/>
</dbReference>
<dbReference type="Reactome" id="R-HSA-5083635">
    <property type="pathway name" value="Defective B3GALTL causes PpS"/>
</dbReference>
<dbReference type="Reactome" id="R-HSA-5173214">
    <property type="pathway name" value="O-glycosylation of TSR domain-containing proteins"/>
</dbReference>
<dbReference type="SignaLink" id="O95450"/>
<dbReference type="BioGRID-ORCS" id="9509">
    <property type="hits" value="16 hits in 1147 CRISPR screens"/>
</dbReference>
<dbReference type="ChiTaRS" id="ADAMTS2">
    <property type="organism name" value="human"/>
</dbReference>
<dbReference type="GeneWiki" id="ADAMTS2"/>
<dbReference type="GenomeRNAi" id="9509"/>
<dbReference type="Pharos" id="O95450">
    <property type="development level" value="Tbio"/>
</dbReference>
<dbReference type="PRO" id="PR:O95450"/>
<dbReference type="Proteomes" id="UP000005640">
    <property type="component" value="Chromosome 5"/>
</dbReference>
<dbReference type="RNAct" id="O95450">
    <property type="molecule type" value="protein"/>
</dbReference>
<dbReference type="Bgee" id="ENSG00000087116">
    <property type="expression patterns" value="Expressed in stromal cell of endometrium and 94 other cell types or tissues"/>
</dbReference>
<dbReference type="ExpressionAtlas" id="O95450">
    <property type="expression patterns" value="baseline and differential"/>
</dbReference>
<dbReference type="GO" id="GO:0031012">
    <property type="term" value="C:extracellular matrix"/>
    <property type="evidence" value="ECO:0000318"/>
    <property type="project" value="GO_Central"/>
</dbReference>
<dbReference type="GO" id="GO:0005576">
    <property type="term" value="C:extracellular region"/>
    <property type="evidence" value="ECO:0000304"/>
    <property type="project" value="Reactome"/>
</dbReference>
<dbReference type="GO" id="GO:0004222">
    <property type="term" value="F:metalloendopeptidase activity"/>
    <property type="evidence" value="ECO:0000318"/>
    <property type="project" value="GO_Central"/>
</dbReference>
<dbReference type="GO" id="GO:0008237">
    <property type="term" value="F:metallopeptidase activity"/>
    <property type="evidence" value="ECO:0000304"/>
    <property type="project" value="ProtInc"/>
</dbReference>
<dbReference type="GO" id="GO:0008270">
    <property type="term" value="F:zinc ion binding"/>
    <property type="evidence" value="ECO:0007669"/>
    <property type="project" value="InterPro"/>
</dbReference>
<dbReference type="GO" id="GO:0030574">
    <property type="term" value="P:collagen catabolic process"/>
    <property type="evidence" value="ECO:0007669"/>
    <property type="project" value="UniProtKB-KW"/>
</dbReference>
<dbReference type="GO" id="GO:0030199">
    <property type="term" value="P:collagen fibril organization"/>
    <property type="evidence" value="ECO:0000304"/>
    <property type="project" value="Reactome"/>
</dbReference>
<dbReference type="GO" id="GO:0030198">
    <property type="term" value="P:extracellular matrix organization"/>
    <property type="evidence" value="ECO:0000318"/>
    <property type="project" value="GO_Central"/>
</dbReference>
<dbReference type="GO" id="GO:0030324">
    <property type="term" value="P:lung development"/>
    <property type="evidence" value="ECO:0007669"/>
    <property type="project" value="Ensembl"/>
</dbReference>
<dbReference type="GO" id="GO:0016485">
    <property type="term" value="P:protein processing"/>
    <property type="evidence" value="ECO:0007669"/>
    <property type="project" value="Ensembl"/>
</dbReference>
<dbReference type="GO" id="GO:0006508">
    <property type="term" value="P:proteolysis"/>
    <property type="evidence" value="ECO:0000318"/>
    <property type="project" value="GO_Central"/>
</dbReference>
<dbReference type="GO" id="GO:0043588">
    <property type="term" value="P:skin development"/>
    <property type="evidence" value="ECO:0007669"/>
    <property type="project" value="Ensembl"/>
</dbReference>
<dbReference type="GO" id="GO:0007283">
    <property type="term" value="P:spermatogenesis"/>
    <property type="evidence" value="ECO:0007669"/>
    <property type="project" value="Ensembl"/>
</dbReference>
<dbReference type="CDD" id="cd04273">
    <property type="entry name" value="ZnMc_ADAMTS_like"/>
    <property type="match status" value="1"/>
</dbReference>
<dbReference type="FunFam" id="2.20.100.10:FF:000006">
    <property type="entry name" value="A disintegrin and metalloproteinase with thrombospondin motifs 1"/>
    <property type="match status" value="1"/>
</dbReference>
<dbReference type="FunFam" id="2.60.120.830:FF:000001">
    <property type="entry name" value="A disintegrin and metalloproteinase with thrombospondin motifs 1"/>
    <property type="match status" value="1"/>
</dbReference>
<dbReference type="FunFam" id="2.20.100.10:FF:000011">
    <property type="entry name" value="A disintegrin and metalloproteinase with thrombospondin motifs 3"/>
    <property type="match status" value="1"/>
</dbReference>
<dbReference type="FunFam" id="2.20.100.10:FF:000030">
    <property type="entry name" value="A disintegrin and metalloproteinase with thrombospondin motifs 3"/>
    <property type="match status" value="1"/>
</dbReference>
<dbReference type="FunFam" id="3.40.1620.60:FF:000001">
    <property type="entry name" value="A disintegrin and metalloproteinase with thrombospondin motifs 3"/>
    <property type="match status" value="1"/>
</dbReference>
<dbReference type="FunFam" id="3.40.390.10:FF:000008">
    <property type="entry name" value="A disintegrin and metalloproteinase with thrombospondin motifs 3"/>
    <property type="match status" value="1"/>
</dbReference>
<dbReference type="Gene3D" id="2.60.120.830">
    <property type="match status" value="1"/>
</dbReference>
<dbReference type="Gene3D" id="3.40.1620.60">
    <property type="match status" value="1"/>
</dbReference>
<dbReference type="Gene3D" id="3.40.390.10">
    <property type="entry name" value="Collagenase (Catalytic Domain)"/>
    <property type="match status" value="1"/>
</dbReference>
<dbReference type="Gene3D" id="2.20.100.10">
    <property type="entry name" value="Thrombospondin type-1 (TSP1) repeat"/>
    <property type="match status" value="4"/>
</dbReference>
<dbReference type="InterPro" id="IPR013273">
    <property type="entry name" value="ADAMTS/ADAMTS-like"/>
</dbReference>
<dbReference type="InterPro" id="IPR050439">
    <property type="entry name" value="ADAMTS_ADAMTS-like"/>
</dbReference>
<dbReference type="InterPro" id="IPR041645">
    <property type="entry name" value="ADAMTS_CR_2"/>
</dbReference>
<dbReference type="InterPro" id="IPR045371">
    <property type="entry name" value="ADAMTS_CR_3"/>
</dbReference>
<dbReference type="InterPro" id="IPR010294">
    <property type="entry name" value="ADAMTS_spacer1"/>
</dbReference>
<dbReference type="InterPro" id="IPR024079">
    <property type="entry name" value="MetalloPept_cat_dom_sf"/>
</dbReference>
<dbReference type="InterPro" id="IPR013275">
    <property type="entry name" value="Pept_M12B_ADAM-TS2"/>
</dbReference>
<dbReference type="InterPro" id="IPR001590">
    <property type="entry name" value="Peptidase_M12B"/>
</dbReference>
<dbReference type="InterPro" id="IPR002870">
    <property type="entry name" value="Peptidase_M12B_N"/>
</dbReference>
<dbReference type="InterPro" id="IPR010909">
    <property type="entry name" value="PLAC"/>
</dbReference>
<dbReference type="InterPro" id="IPR000884">
    <property type="entry name" value="TSP1_rpt"/>
</dbReference>
<dbReference type="InterPro" id="IPR036383">
    <property type="entry name" value="TSP1_rpt_sf"/>
</dbReference>
<dbReference type="PANTHER" id="PTHR13723:SF141">
    <property type="entry name" value="A DISINTEGRIN AND METALLOPROTEINASE WITH THROMBOSPONDIN MOTIFS 2"/>
    <property type="match status" value="1"/>
</dbReference>
<dbReference type="PANTHER" id="PTHR13723">
    <property type="entry name" value="ADAMTS A DISINTEGRIN AND METALLOPROTEASE WITH THROMBOSPONDIN MOTIFS PROTEASE"/>
    <property type="match status" value="1"/>
</dbReference>
<dbReference type="Pfam" id="PF17771">
    <property type="entry name" value="ADAMTS_CR_2"/>
    <property type="match status" value="1"/>
</dbReference>
<dbReference type="Pfam" id="PF19236">
    <property type="entry name" value="ADAMTS_CR_3"/>
    <property type="match status" value="1"/>
</dbReference>
<dbReference type="Pfam" id="PF05986">
    <property type="entry name" value="ADAMTS_spacer1"/>
    <property type="match status" value="1"/>
</dbReference>
<dbReference type="Pfam" id="PF01562">
    <property type="entry name" value="Pep_M12B_propep"/>
    <property type="match status" value="1"/>
</dbReference>
<dbReference type="Pfam" id="PF01421">
    <property type="entry name" value="Reprolysin"/>
    <property type="match status" value="1"/>
</dbReference>
<dbReference type="Pfam" id="PF19030">
    <property type="entry name" value="TSP1_ADAMTS"/>
    <property type="match status" value="3"/>
</dbReference>
<dbReference type="Pfam" id="PF00090">
    <property type="entry name" value="TSP_1"/>
    <property type="match status" value="1"/>
</dbReference>
<dbReference type="PRINTS" id="PR01859">
    <property type="entry name" value="ADAMTS2"/>
</dbReference>
<dbReference type="PRINTS" id="PR01857">
    <property type="entry name" value="ADAMTSFAMILY"/>
</dbReference>
<dbReference type="SMART" id="SM00209">
    <property type="entry name" value="TSP1"/>
    <property type="match status" value="4"/>
</dbReference>
<dbReference type="SUPFAM" id="SSF55486">
    <property type="entry name" value="Metalloproteases ('zincins'), catalytic domain"/>
    <property type="match status" value="1"/>
</dbReference>
<dbReference type="SUPFAM" id="SSF82895">
    <property type="entry name" value="TSP-1 type 1 repeat"/>
    <property type="match status" value="4"/>
</dbReference>
<dbReference type="PROSITE" id="PS50215">
    <property type="entry name" value="ADAM_MEPRO"/>
    <property type="match status" value="1"/>
</dbReference>
<dbReference type="PROSITE" id="PS50900">
    <property type="entry name" value="PLAC"/>
    <property type="match status" value="1"/>
</dbReference>
<dbReference type="PROSITE" id="PS50092">
    <property type="entry name" value="TSP1"/>
    <property type="match status" value="4"/>
</dbReference>
<organism>
    <name type="scientific">Homo sapiens</name>
    <name type="common">Human</name>
    <dbReference type="NCBI Taxonomy" id="9606"/>
    <lineage>
        <taxon>Eukaryota</taxon>
        <taxon>Metazoa</taxon>
        <taxon>Chordata</taxon>
        <taxon>Craniata</taxon>
        <taxon>Vertebrata</taxon>
        <taxon>Euteleostomi</taxon>
        <taxon>Mammalia</taxon>
        <taxon>Eutheria</taxon>
        <taxon>Euarchontoglires</taxon>
        <taxon>Primates</taxon>
        <taxon>Haplorrhini</taxon>
        <taxon>Catarrhini</taxon>
        <taxon>Hominidae</taxon>
        <taxon>Homo</taxon>
    </lineage>
</organism>
<name>ATS2_HUMAN</name>
<protein>
    <recommendedName>
        <fullName>A disintegrin and metalloproteinase with thrombospondin motifs 2</fullName>
        <shortName>ADAM-TS 2</shortName>
        <shortName>ADAM-TS2</shortName>
        <shortName>ADAMTS-2</shortName>
        <ecNumber>3.4.24.14</ecNumber>
    </recommendedName>
    <alternativeName>
        <fullName>Procollagen I N-proteinase</fullName>
        <shortName>PC I-NP</shortName>
    </alternativeName>
    <alternativeName>
        <fullName>Procollagen I/II amino propeptide-processing enzyme</fullName>
    </alternativeName>
    <alternativeName>
        <fullName>Procollagen N-endopeptidase</fullName>
        <shortName>pNPI</shortName>
    </alternativeName>
</protein>
<reference key="1">
    <citation type="journal article" date="1999" name="Am. J. Hum. Genet.">
        <title>Human Ehlers-Danlos syndrome type VII C and bovine dermatosparaxis are caused by mutations in the procollagen I N-proteinase gene.</title>
        <authorList>
            <person name="Colige A."/>
            <person name="Sieron A.L."/>
            <person name="Li S.-W."/>
            <person name="Schwarze U."/>
            <person name="Petty E."/>
            <person name="Wertelecki W."/>
            <person name="Wilcox W."/>
            <person name="Krakow D."/>
            <person name="Cohn D.H."/>
            <person name="Reardon W."/>
            <person name="Byers P.H."/>
            <person name="Lapiere C.M."/>
            <person name="Prockop D.J."/>
            <person name="Nusgens B.V."/>
        </authorList>
    </citation>
    <scope>NUCLEOTIDE SEQUENCE [MRNA] (ISOFORMS LPNPI AND SPNPI)</scope>
    <scope>INVOLVEMENT IN EDSDERMS</scope>
    <source>
        <tissue>Skin</tissue>
    </source>
</reference>
<reference key="2">
    <citation type="journal article" date="2004" name="Nature">
        <title>The DNA sequence and comparative analysis of human chromosome 5.</title>
        <authorList>
            <person name="Schmutz J."/>
            <person name="Martin J."/>
            <person name="Terry A."/>
            <person name="Couronne O."/>
            <person name="Grimwood J."/>
            <person name="Lowry S."/>
            <person name="Gordon L.A."/>
            <person name="Scott D."/>
            <person name="Xie G."/>
            <person name="Huang W."/>
            <person name="Hellsten U."/>
            <person name="Tran-Gyamfi M."/>
            <person name="She X."/>
            <person name="Prabhakar S."/>
            <person name="Aerts A."/>
            <person name="Altherr M."/>
            <person name="Bajorek E."/>
            <person name="Black S."/>
            <person name="Branscomb E."/>
            <person name="Caoile C."/>
            <person name="Challacombe J.F."/>
            <person name="Chan Y.M."/>
            <person name="Denys M."/>
            <person name="Detter J.C."/>
            <person name="Escobar J."/>
            <person name="Flowers D."/>
            <person name="Fotopulos D."/>
            <person name="Glavina T."/>
            <person name="Gomez M."/>
            <person name="Gonzales E."/>
            <person name="Goodstein D."/>
            <person name="Grigoriev I."/>
            <person name="Groza M."/>
            <person name="Hammon N."/>
            <person name="Hawkins T."/>
            <person name="Haydu L."/>
            <person name="Israni S."/>
            <person name="Jett J."/>
            <person name="Kadner K."/>
            <person name="Kimball H."/>
            <person name="Kobayashi A."/>
            <person name="Lopez F."/>
            <person name="Lou Y."/>
            <person name="Martinez D."/>
            <person name="Medina C."/>
            <person name="Morgan J."/>
            <person name="Nandkeshwar R."/>
            <person name="Noonan J.P."/>
            <person name="Pitluck S."/>
            <person name="Pollard M."/>
            <person name="Predki P."/>
            <person name="Priest J."/>
            <person name="Ramirez L."/>
            <person name="Retterer J."/>
            <person name="Rodriguez A."/>
            <person name="Rogers S."/>
            <person name="Salamov A."/>
            <person name="Salazar A."/>
            <person name="Thayer N."/>
            <person name="Tice H."/>
            <person name="Tsai M."/>
            <person name="Ustaszewska A."/>
            <person name="Vo N."/>
            <person name="Wheeler J."/>
            <person name="Wu K."/>
            <person name="Yang J."/>
            <person name="Dickson M."/>
            <person name="Cheng J.-F."/>
            <person name="Eichler E.E."/>
            <person name="Olsen A."/>
            <person name="Pennacchio L.A."/>
            <person name="Rokhsar D.S."/>
            <person name="Richardson P."/>
            <person name="Lucas S.M."/>
            <person name="Myers R.M."/>
            <person name="Rubin E.M."/>
        </authorList>
    </citation>
    <scope>NUCLEOTIDE SEQUENCE [LARGE SCALE GENOMIC DNA]</scope>
</reference>
<reference key="3">
    <citation type="journal article" date="2019" name="J. Biol. Chem.">
        <title>Differential cleavage of lysyl oxidase by the metalloproteinases BMP1 and ADAMTS2/14 regulates collagen binding through a tyrosine sulfate domain.</title>
        <authorList>
            <person name="Rosell-Garcia T."/>
            <person name="Paradela A."/>
            <person name="Bravo G."/>
            <person name="Dupont L."/>
            <person name="Bekhouche M."/>
            <person name="Colige A."/>
            <person name="Rodriguez-Pascual F."/>
        </authorList>
    </citation>
    <scope>FUNCTION</scope>
</reference>
<comment type="function">
    <text evidence="2 9">Cleaves the propeptides of type I and II collagen prior to fibril assembly (By similarity). Does not act on type III collagen (By similarity). Cleaves lysyl oxidase LOX at a site downstream of its propeptide cleavage site to produce a short LOX form with reduced collagen-binding activity (PubMed:31152061).</text>
</comment>
<comment type="catalytic activity">
    <reaction>
        <text>Cleaves the N-propeptide of collagen chain alpha1(I) at Pro-|-Gln and of alpha1(II) and alpha2(I) at Ala-|-Gln.</text>
        <dbReference type="EC" id="3.4.24.14"/>
    </reaction>
</comment>
<comment type="cofactor">
    <cofactor evidence="1">
        <name>Zn(2+)</name>
        <dbReference type="ChEBI" id="CHEBI:29105"/>
    </cofactor>
    <text evidence="1">Binds 1 zinc ion per subunit.</text>
</comment>
<comment type="subunit">
    <text evidence="1">May belong to a multimeric complex. Binds specifically to collagen type XIV (By similarity).</text>
</comment>
<comment type="subcellular location">
    <subcellularLocation>
        <location evidence="1">Secreted</location>
        <location evidence="1">Extracellular space</location>
        <location evidence="1">Extracellular matrix</location>
    </subcellularLocation>
</comment>
<comment type="alternative products">
    <event type="alternative splicing"/>
    <isoform>
        <id>O95450-1</id>
        <name>LpNPI</name>
        <sequence type="displayed"/>
    </isoform>
    <isoform>
        <id>O95450-2</id>
        <name>SpNPI</name>
        <sequence type="described" ref="VSP_005497 VSP_005498"/>
    </isoform>
</comment>
<comment type="tissue specificity">
    <text>Expressed at high level in skin, bone, tendon and aorta and at low levels in thymus and brain.</text>
</comment>
<comment type="domain">
    <text>The spacer domain and the TSP type-1 domains are important for a tight interaction with the extracellular matrix.</text>
</comment>
<comment type="PTM">
    <text evidence="1">The precursor is cleaved by a furin endopeptidase.</text>
</comment>
<comment type="PTM">
    <text evidence="1">Glycosylated. Can be O-fucosylated by POFUT2 on a serine or a threonine residue found within the consensus sequence C1-X(2)-(S/T)-C2-G of the TSP type-1 repeat domains where C1 and C2 are the first and second cysteine residue of the repeat, respectively. Fucosylated repeats can then be further glycosylated by the addition of a beta-1,3-glucose residue by the glucosyltransferase, B3GALTL. Fucosylation mediates the efficient secretion of ADAMTS family members. Can also be C-glycosylated with one or two mannose molecules on tryptophan residues within the consensus sequence W-X-X-W of the TPRs, and N-glycosylated. These other glycosylations can also facilitate secretion (By similarity).</text>
</comment>
<comment type="disease" evidence="8">
    <disease id="DI-00444">
        <name>Ehlers-Danlos syndrome, dermatosparaxis type</name>
        <acronym>EDSDERMS</acronym>
        <description>A form of Ehlers-Danlos syndrome, a group of connective tissue disorders characterized by skin hyperextensibility, articular hypermobility, and tissue fragility. EDSDERMS is an autosomal recessive form characterized by extreme skin fragility and easy bruising, large fontanels, blue sclerae, puffy eyelids, micrognathia, umbilical hernia, and short fingers. Joint hypermobility becomes more important with age.</description>
        <dbReference type="MIM" id="225410"/>
    </disease>
    <text>The disease is caused by variants affecting the gene represented in this entry.</text>
</comment>
<comment type="miscellaneous">
    <molecule>Isoform SpNPI</molecule>
    <text evidence="11">Has no significant N-procollagen peptidase activity.</text>
</comment>
<comment type="caution">
    <text evidence="11">Has sometimes been referred to as ADAMTS3.</text>
</comment>
<sequence>MDPPAGAARRLLCPALLLLLLLLPPPLLPPPPPPANARLAAAADPPGGPLGHGAERILAVPVRTDAQGRLVSHVVSAATSRAGVRARRAAPVRTPSFPGGNEEEPGSHLFYNVTVFGRDLHLRLRPNARLVAPGATMEWQGEKGTTRVEPLLGSCLYVGDVAGLAEASSVALSNCDGLAGLIRMEEEEFFIEPLEKGLAAQEAEQGRVHVVYRRPPTSPPLGGPQALDTGASLDSLDSLSRALGVLEEHANSSRRRARRHAADDDYNIEVLLGVDDSVVQFHGKEHVQKYLLTLMNIVNEIYHDESLGAHINVVLVRIILLSYGKSMSLIEIGNPSQSLENVCRWAYLQQKPDTGHDEYHDHAIFLTRQDFGPSGMQGYAPVTGMCHPVRSCTLNHEDGFSSAFVVAHETGHVLGMEHDGQGNRCGDEVRLGSIMAPLVQAAFHRFHWSRCSQQELSRYLHSYDCLLDDPFAHDWPALPQLPGLHYSMNEQCRFDFGLGYMMCTAFRTFDPCKQLWCSHPDNPYFCKTKKGPPLDGTMCAPGKHCFKGHCIWLTPDILKRDGSWGAWSPFGSCSRTCGTGVKFRTRQCDNPHPANGGRTCSGLAYDFQLCSRQDCPDSLADFREEQCRQWDLYFEHGDAQHHWLPHEHRDAKERCHLYCESRETGEVVSMKRMVHDGTRCSYKDAFSLCVRGDCRKVGCDGVIGSSKQEDKCGVCGGDNSHCKVVKGTFTRSPKKHGYIKMFEIPAGARHLLIQEVDATSHHLAVKNLETGKFILNEENDVDASSKTFIAMGVEWEYRDEDGRETLQTMGPLHGTITVLVIPVGDTRVSLTYKYMIHEDSLNVDDNNVLEEDSVVYEWALKKWSPCSKPCGGGSQFTKYGCRRRLDHKMVHRGFCAALSKPKAIRRACNPQECSQPVWVTGEWEPCSQTCGRTGMQVRSVRCIQPLHDNTTRSVHAKHCNDARPESRRACSRELCPGRWRAGPWSQCSVTCGNGTQERPVLCRTADDSFGICQEERPETARTCRLGPCPRNISDPSKKSYVVQWLSRPDPDSPIRKISSKGHCQGDKSIFCRMEVLSRYCSIPGYNKLCCKSCNLYNNLTNVEGRIEPPPGKHNDIDVFMPTLPVPTVAMEVRPSPSTPLEVPLNASSTNATEDHPETNAVDEPYKIHGLEDEVQPPNLIPRRPSPYEKTRNQRIQELIDEMRKKEMLGKF</sequence>
<keyword id="KW-0025">Alternative splicing</keyword>
<keyword id="KW-0177">Collagen degradation</keyword>
<keyword id="KW-1015">Disulfide bond</keyword>
<keyword id="KW-0248">Ehlers-Danlos syndrome</keyword>
<keyword id="KW-0272">Extracellular matrix</keyword>
<keyword id="KW-0325">Glycoprotein</keyword>
<keyword id="KW-0378">Hydrolase</keyword>
<keyword id="KW-0479">Metal-binding</keyword>
<keyword id="KW-0482">Metalloprotease</keyword>
<keyword id="KW-0645">Protease</keyword>
<keyword id="KW-1267">Proteomics identification</keyword>
<keyword id="KW-1185">Reference proteome</keyword>
<keyword id="KW-0677">Repeat</keyword>
<keyword id="KW-0964">Secreted</keyword>
<keyword id="KW-0732">Signal</keyword>
<keyword id="KW-0862">Zinc</keyword>
<keyword id="KW-0865">Zymogen</keyword>
<evidence type="ECO:0000250" key="1"/>
<evidence type="ECO:0000250" key="2">
    <source>
        <dbReference type="UniProtKB" id="P79331"/>
    </source>
</evidence>
<evidence type="ECO:0000255" key="3"/>
<evidence type="ECO:0000255" key="4">
    <source>
        <dbReference type="PROSITE-ProRule" id="PRU00210"/>
    </source>
</evidence>
<evidence type="ECO:0000255" key="5">
    <source>
        <dbReference type="PROSITE-ProRule" id="PRU00233"/>
    </source>
</evidence>
<evidence type="ECO:0000255" key="6">
    <source>
        <dbReference type="PROSITE-ProRule" id="PRU00276"/>
    </source>
</evidence>
<evidence type="ECO:0000256" key="7">
    <source>
        <dbReference type="SAM" id="MobiDB-lite"/>
    </source>
</evidence>
<evidence type="ECO:0000269" key="8">
    <source>
    </source>
</evidence>
<evidence type="ECO:0000269" key="9">
    <source>
    </source>
</evidence>
<evidence type="ECO:0000303" key="10">
    <source>
    </source>
</evidence>
<evidence type="ECO:0000305" key="11"/>
<gene>
    <name type="primary">ADAMTS2</name>
    <name type="synonym">PCINP</name>
    <name type="synonym">PCPNI</name>
</gene>